<reference key="1">
    <citation type="journal article" date="2024" name="J. Biol. Chem.">
        <title>Peptide toxins that target vertebrate voltage-gated sodium channels underly the painful stings of harvester ants.</title>
        <authorList>
            <person name="Robinson S.D."/>
            <person name="Deuis J.R."/>
            <person name="Niu P."/>
            <person name="Touchard A."/>
            <person name="Mueller A."/>
            <person name="Schendel V."/>
            <person name="Brinkwirth N."/>
            <person name="King G.F."/>
            <person name="Vetter I."/>
            <person name="Schmidt J.O."/>
        </authorList>
    </citation>
    <scope>NUCLEOTIDE SEQUENCE [MRNA]</scope>
    <scope>PROBABLE AMIDATION AT SER-73</scope>
    <source>
        <tissue>Venom gland</tissue>
    </source>
</reference>
<dbReference type="EMBL" id="OR128478">
    <property type="protein sequence ID" value="WMI02516.1"/>
    <property type="molecule type" value="mRNA"/>
</dbReference>
<dbReference type="GO" id="GO:0005576">
    <property type="term" value="C:extracellular region"/>
    <property type="evidence" value="ECO:0007669"/>
    <property type="project" value="UniProtKB-SubCell"/>
</dbReference>
<dbReference type="GO" id="GO:0017080">
    <property type="term" value="F:sodium channel regulator activity"/>
    <property type="evidence" value="ECO:0007669"/>
    <property type="project" value="UniProtKB-KW"/>
</dbReference>
<dbReference type="GO" id="GO:0090729">
    <property type="term" value="F:toxin activity"/>
    <property type="evidence" value="ECO:0007669"/>
    <property type="project" value="UniProtKB-KW"/>
</dbReference>
<proteinExistence type="evidence at protein level"/>
<sequence length="74" mass="7520">MEIPKFLFITVIAIGLSGSLTWANPLANPEAEATAEAGPEAEAVAEAIGEAEPALPLLPLISLLVSLIPAIKSG</sequence>
<keyword id="KW-0027">Amidation</keyword>
<keyword id="KW-0872">Ion channel impairing toxin</keyword>
<keyword id="KW-0528">Neurotoxin</keyword>
<keyword id="KW-0964">Secreted</keyword>
<keyword id="KW-0732">Signal</keyword>
<keyword id="KW-0800">Toxin</keyword>
<keyword id="KW-0738">Voltage-gated sodium channel impairing toxin</keyword>
<protein>
    <recommendedName>
        <fullName evidence="5">Myrmicitoxin(1)-Pr3a</fullName>
        <shortName evidence="5">MYRTX(1)-Pr3a</shortName>
    </recommendedName>
</protein>
<organism>
    <name type="scientific">Pogonomyrmex rugosus</name>
    <name type="common">Desert harvester ant</name>
    <dbReference type="NCBI Taxonomy" id="144042"/>
    <lineage>
        <taxon>Eukaryota</taxon>
        <taxon>Metazoa</taxon>
        <taxon>Ecdysozoa</taxon>
        <taxon>Arthropoda</taxon>
        <taxon>Hexapoda</taxon>
        <taxon>Insecta</taxon>
        <taxon>Pterygota</taxon>
        <taxon>Neoptera</taxon>
        <taxon>Endopterygota</taxon>
        <taxon>Hymenoptera</taxon>
        <taxon>Apocrita</taxon>
        <taxon>Aculeata</taxon>
        <taxon>Formicoidea</taxon>
        <taxon>Formicidae</taxon>
        <taxon>Myrmicinae</taxon>
        <taxon>Pogonomyrmex</taxon>
    </lineage>
</organism>
<name>TX3A_POGRU</name>
<feature type="signal peptide" evidence="4">
    <location>
        <begin position="1"/>
        <end position="23"/>
    </location>
</feature>
<feature type="propeptide" id="PRO_0000461251" evidence="7">
    <location>
        <begin position="24"/>
        <end position="53"/>
    </location>
</feature>
<feature type="peptide" id="PRO_0000461252" description="Myrmicitoxin(1)-Pr3a" evidence="7">
    <location>
        <begin position="54"/>
        <end position="73"/>
    </location>
</feature>
<feature type="modified residue" description="Serine amide" evidence="7">
    <location>
        <position position="73"/>
    </location>
</feature>
<evidence type="ECO:0000250" key="1">
    <source>
        <dbReference type="UniProtKB" id="A0A8U0LTF0"/>
    </source>
</evidence>
<evidence type="ECO:0000250" key="2">
    <source>
        <dbReference type="UniProtKB" id="P0DRD0"/>
    </source>
</evidence>
<evidence type="ECO:0000250" key="3">
    <source>
        <dbReference type="UniProtKB" id="P0DX61"/>
    </source>
</evidence>
<evidence type="ECO:0000255" key="4"/>
<evidence type="ECO:0000303" key="5">
    <source>
    </source>
</evidence>
<evidence type="ECO:0000305" key="6"/>
<evidence type="ECO:0000305" key="7">
    <source>
    </source>
</evidence>
<comment type="function">
    <text evidence="1 2 3">Vertebrate-selective toxin that causes pain by targeting voltage-gated sodium channels.</text>
</comment>
<comment type="subcellular location">
    <subcellularLocation>
        <location evidence="7">Secreted</location>
    </subcellularLocation>
</comment>
<comment type="tissue specificity">
    <text evidence="7">Expressed by the venom gland.</text>
</comment>
<comment type="similarity">
    <text evidence="6">Belongs to the formicidae venom clade 1 family.</text>
</comment>
<accession>P0DXT6</accession>